<proteinExistence type="inferred from homology"/>
<name>RL7_CARHZ</name>
<sequence length="127" mass="13104">MSKVQEILEAVKSLTVLELAELVKAFEEEFGVSAAAPVAVAAAPAAGAAAAAPAQEEKTEFDVILVSPGAQKVNVIKVVREITGLGLKESKDLVDGAPKPVKEKVSKADAEAIKAKLEEVGATVEIK</sequence>
<dbReference type="EMBL" id="CP000141">
    <property type="protein sequence ID" value="ABB15956.1"/>
    <property type="molecule type" value="Genomic_DNA"/>
</dbReference>
<dbReference type="RefSeq" id="WP_011345202.1">
    <property type="nucleotide sequence ID" value="NC_007503.1"/>
</dbReference>
<dbReference type="SMR" id="Q3A9Q5"/>
<dbReference type="FunCoup" id="Q3A9Q5">
    <property type="interactions" value="436"/>
</dbReference>
<dbReference type="STRING" id="246194.CHY_2320"/>
<dbReference type="KEGG" id="chy:CHY_2320"/>
<dbReference type="eggNOG" id="COG0222">
    <property type="taxonomic scope" value="Bacteria"/>
</dbReference>
<dbReference type="HOGENOM" id="CLU_086499_3_2_9"/>
<dbReference type="InParanoid" id="Q3A9Q5"/>
<dbReference type="OrthoDB" id="9811748at2"/>
<dbReference type="Proteomes" id="UP000002706">
    <property type="component" value="Chromosome"/>
</dbReference>
<dbReference type="GO" id="GO:0022625">
    <property type="term" value="C:cytosolic large ribosomal subunit"/>
    <property type="evidence" value="ECO:0007669"/>
    <property type="project" value="TreeGrafter"/>
</dbReference>
<dbReference type="GO" id="GO:0003729">
    <property type="term" value="F:mRNA binding"/>
    <property type="evidence" value="ECO:0007669"/>
    <property type="project" value="TreeGrafter"/>
</dbReference>
<dbReference type="GO" id="GO:0003735">
    <property type="term" value="F:structural constituent of ribosome"/>
    <property type="evidence" value="ECO:0007669"/>
    <property type="project" value="InterPro"/>
</dbReference>
<dbReference type="GO" id="GO:0006412">
    <property type="term" value="P:translation"/>
    <property type="evidence" value="ECO:0007669"/>
    <property type="project" value="UniProtKB-UniRule"/>
</dbReference>
<dbReference type="CDD" id="cd00387">
    <property type="entry name" value="Ribosomal_L7_L12"/>
    <property type="match status" value="1"/>
</dbReference>
<dbReference type="FunFam" id="3.30.1390.10:FF:000001">
    <property type="entry name" value="50S ribosomal protein L7/L12"/>
    <property type="match status" value="1"/>
</dbReference>
<dbReference type="Gene3D" id="3.30.1390.10">
    <property type="match status" value="1"/>
</dbReference>
<dbReference type="Gene3D" id="1.20.5.710">
    <property type="entry name" value="Single helix bin"/>
    <property type="match status" value="1"/>
</dbReference>
<dbReference type="HAMAP" id="MF_00368">
    <property type="entry name" value="Ribosomal_bL12"/>
    <property type="match status" value="1"/>
</dbReference>
<dbReference type="InterPro" id="IPR000206">
    <property type="entry name" value="Ribosomal_bL12"/>
</dbReference>
<dbReference type="InterPro" id="IPR013823">
    <property type="entry name" value="Ribosomal_bL12_C"/>
</dbReference>
<dbReference type="InterPro" id="IPR014719">
    <property type="entry name" value="Ribosomal_bL12_C/ClpS-like"/>
</dbReference>
<dbReference type="InterPro" id="IPR008932">
    <property type="entry name" value="Ribosomal_bL12_oligo"/>
</dbReference>
<dbReference type="InterPro" id="IPR036235">
    <property type="entry name" value="Ribosomal_bL12_oligo_N_sf"/>
</dbReference>
<dbReference type="NCBIfam" id="TIGR00855">
    <property type="entry name" value="L12"/>
    <property type="match status" value="1"/>
</dbReference>
<dbReference type="PANTHER" id="PTHR45987">
    <property type="entry name" value="39S RIBOSOMAL PROTEIN L12"/>
    <property type="match status" value="1"/>
</dbReference>
<dbReference type="PANTHER" id="PTHR45987:SF4">
    <property type="entry name" value="LARGE RIBOSOMAL SUBUNIT PROTEIN BL12M"/>
    <property type="match status" value="1"/>
</dbReference>
<dbReference type="Pfam" id="PF00542">
    <property type="entry name" value="Ribosomal_L12"/>
    <property type="match status" value="1"/>
</dbReference>
<dbReference type="Pfam" id="PF16320">
    <property type="entry name" value="Ribosomal_L12_N"/>
    <property type="match status" value="1"/>
</dbReference>
<dbReference type="SUPFAM" id="SSF54736">
    <property type="entry name" value="ClpS-like"/>
    <property type="match status" value="1"/>
</dbReference>
<dbReference type="SUPFAM" id="SSF48300">
    <property type="entry name" value="Ribosomal protein L7/12, oligomerisation (N-terminal) domain"/>
    <property type="match status" value="1"/>
</dbReference>
<evidence type="ECO:0000255" key="1">
    <source>
        <dbReference type="HAMAP-Rule" id="MF_00368"/>
    </source>
</evidence>
<evidence type="ECO:0000305" key="2"/>
<protein>
    <recommendedName>
        <fullName evidence="1">Large ribosomal subunit protein bL12</fullName>
    </recommendedName>
    <alternativeName>
        <fullName evidence="2">50S ribosomal protein L7/L12</fullName>
    </alternativeName>
</protein>
<reference key="1">
    <citation type="journal article" date="2005" name="PLoS Genet.">
        <title>Life in hot carbon monoxide: the complete genome sequence of Carboxydothermus hydrogenoformans Z-2901.</title>
        <authorList>
            <person name="Wu M."/>
            <person name="Ren Q."/>
            <person name="Durkin A.S."/>
            <person name="Daugherty S.C."/>
            <person name="Brinkac L.M."/>
            <person name="Dodson R.J."/>
            <person name="Madupu R."/>
            <person name="Sullivan S.A."/>
            <person name="Kolonay J.F."/>
            <person name="Nelson W.C."/>
            <person name="Tallon L.J."/>
            <person name="Jones K.M."/>
            <person name="Ulrich L.E."/>
            <person name="Gonzalez J.M."/>
            <person name="Zhulin I.B."/>
            <person name="Robb F.T."/>
            <person name="Eisen J.A."/>
        </authorList>
    </citation>
    <scope>NUCLEOTIDE SEQUENCE [LARGE SCALE GENOMIC DNA]</scope>
    <source>
        <strain>ATCC BAA-161 / DSM 6008 / Z-2901</strain>
    </source>
</reference>
<feature type="chain" id="PRO_0000243406" description="Large ribosomal subunit protein bL12">
    <location>
        <begin position="1"/>
        <end position="127"/>
    </location>
</feature>
<accession>Q3A9Q5</accession>
<organism>
    <name type="scientific">Carboxydothermus hydrogenoformans (strain ATCC BAA-161 / DSM 6008 / Z-2901)</name>
    <dbReference type="NCBI Taxonomy" id="246194"/>
    <lineage>
        <taxon>Bacteria</taxon>
        <taxon>Bacillati</taxon>
        <taxon>Bacillota</taxon>
        <taxon>Clostridia</taxon>
        <taxon>Thermoanaerobacterales</taxon>
        <taxon>Thermoanaerobacteraceae</taxon>
        <taxon>Carboxydothermus</taxon>
    </lineage>
</organism>
<comment type="function">
    <text evidence="1">Forms part of the ribosomal stalk which helps the ribosome interact with GTP-bound translation factors. Is thus essential for accurate translation.</text>
</comment>
<comment type="subunit">
    <text evidence="1">Homodimer. Part of the ribosomal stalk of the 50S ribosomal subunit. Forms a multimeric L10(L12)X complex, where L10 forms an elongated spine to which 2 to 4 L12 dimers bind in a sequential fashion. Binds GTP-bound translation factors.</text>
</comment>
<comment type="similarity">
    <text evidence="1">Belongs to the bacterial ribosomal protein bL12 family.</text>
</comment>
<gene>
    <name evidence="1" type="primary">rplL</name>
    <name type="ordered locus">CHY_2320</name>
</gene>
<keyword id="KW-1185">Reference proteome</keyword>
<keyword id="KW-0687">Ribonucleoprotein</keyword>
<keyword id="KW-0689">Ribosomal protein</keyword>